<keyword id="KW-0997">Cell inner membrane</keyword>
<keyword id="KW-1003">Cell membrane</keyword>
<keyword id="KW-0472">Membrane</keyword>
<keyword id="KW-0812">Transmembrane</keyword>
<keyword id="KW-1133">Transmembrane helix</keyword>
<protein>
    <recommendedName>
        <fullName evidence="1">UPF0761 membrane protein Clim_1521</fullName>
    </recommendedName>
</protein>
<reference key="1">
    <citation type="submission" date="2008-05" db="EMBL/GenBank/DDBJ databases">
        <title>Complete sequence of Chlorobium limicola DSM 245.</title>
        <authorList>
            <consortium name="US DOE Joint Genome Institute"/>
            <person name="Lucas S."/>
            <person name="Copeland A."/>
            <person name="Lapidus A."/>
            <person name="Glavina del Rio T."/>
            <person name="Dalin E."/>
            <person name="Tice H."/>
            <person name="Bruce D."/>
            <person name="Goodwin L."/>
            <person name="Pitluck S."/>
            <person name="Schmutz J."/>
            <person name="Larimer F."/>
            <person name="Land M."/>
            <person name="Hauser L."/>
            <person name="Kyrpides N."/>
            <person name="Ovchinnikova G."/>
            <person name="Zhao F."/>
            <person name="Li T."/>
            <person name="Liu Z."/>
            <person name="Overmann J."/>
            <person name="Bryant D.A."/>
            <person name="Richardson P."/>
        </authorList>
    </citation>
    <scope>NUCLEOTIDE SEQUENCE [LARGE SCALE GENOMIC DNA]</scope>
    <source>
        <strain>DSM 245 / NBRC 103803 / 6330</strain>
    </source>
</reference>
<organism>
    <name type="scientific">Chlorobium limicola (strain DSM 245 / NBRC 103803 / 6330)</name>
    <dbReference type="NCBI Taxonomy" id="290315"/>
    <lineage>
        <taxon>Bacteria</taxon>
        <taxon>Pseudomonadati</taxon>
        <taxon>Chlorobiota</taxon>
        <taxon>Chlorobiia</taxon>
        <taxon>Chlorobiales</taxon>
        <taxon>Chlorobiaceae</taxon>
        <taxon>Chlorobium/Pelodictyon group</taxon>
        <taxon>Chlorobium</taxon>
    </lineage>
</organism>
<accession>B3EDE6</accession>
<proteinExistence type="inferred from homology"/>
<feature type="chain" id="PRO_0000391027" description="UPF0761 membrane protein Clim_1521">
    <location>
        <begin position="1"/>
        <end position="441"/>
    </location>
</feature>
<feature type="transmembrane region" description="Helical" evidence="1">
    <location>
        <begin position="54"/>
        <end position="74"/>
    </location>
</feature>
<feature type="transmembrane region" description="Helical" evidence="1">
    <location>
        <begin position="122"/>
        <end position="142"/>
    </location>
</feature>
<feature type="transmembrane region" description="Helical" evidence="1">
    <location>
        <begin position="161"/>
        <end position="181"/>
    </location>
</feature>
<feature type="transmembrane region" description="Helical" evidence="1">
    <location>
        <begin position="203"/>
        <end position="223"/>
    </location>
</feature>
<feature type="transmembrane region" description="Helical" evidence="1">
    <location>
        <begin position="233"/>
        <end position="253"/>
    </location>
</feature>
<feature type="transmembrane region" description="Helical" evidence="1">
    <location>
        <begin position="266"/>
        <end position="286"/>
    </location>
</feature>
<evidence type="ECO:0000255" key="1">
    <source>
        <dbReference type="HAMAP-Rule" id="MF_00672"/>
    </source>
</evidence>
<comment type="subcellular location">
    <subcellularLocation>
        <location evidence="1">Cell inner membrane</location>
        <topology evidence="1">Multi-pass membrane protein</topology>
    </subcellularLocation>
</comment>
<comment type="similarity">
    <text evidence="1">Belongs to the UPF0761 family.</text>
</comment>
<gene>
    <name type="ordered locus">Clim_1521</name>
</gene>
<sequence>MAVGAEPKAAVRETVKRNIMTLQPVDVTWRFAGLQEYFRKLMPFFLKNLRHDKIFLSAGSLAFQTLLSIVPFLAVTLSVLRIFSFFASLNRYLEEFIFQNFIPSAGEDLRIHFEAFIGKTSTVPLIGGLLLFIIALSLISTIDRTLNDIWKVRAPRKPIQAFTLYWTVLTLGPVLIGSSLGASSYVWYTVFTEGPLLELKIRLISFLPFVNSLLSFLLLYMLVPNRRVKLPHAFSGAVAAALLFELSKKWFVFYVSRFATFEHIYGAISAVPLLFFWIYIGWLVVLTGAELVFSIGNVLSSSVEPVPKRLLPGLTQLFSVLGTIWRAQQDGSPVHIGTRVVRGALSATAADRIVDLLLQKGVVHETSGGELVVSADLYQMTLFDLYGLIPWELAVHEDLEGYDDDGSETFASLEKDVTVCLKETMAVPVALLLQDSTNQCI</sequence>
<name>Y1521_CHLL2</name>
<dbReference type="EMBL" id="CP001097">
    <property type="protein sequence ID" value="ACD90571.1"/>
    <property type="molecule type" value="Genomic_DNA"/>
</dbReference>
<dbReference type="SMR" id="B3EDE6"/>
<dbReference type="STRING" id="290315.Clim_1521"/>
<dbReference type="KEGG" id="cli:Clim_1521"/>
<dbReference type="eggNOG" id="COG1295">
    <property type="taxonomic scope" value="Bacteria"/>
</dbReference>
<dbReference type="HOGENOM" id="CLU_032288_1_0_10"/>
<dbReference type="OrthoDB" id="9808671at2"/>
<dbReference type="Proteomes" id="UP000008841">
    <property type="component" value="Chromosome"/>
</dbReference>
<dbReference type="GO" id="GO:0005886">
    <property type="term" value="C:plasma membrane"/>
    <property type="evidence" value="ECO:0007669"/>
    <property type="project" value="UniProtKB-SubCell"/>
</dbReference>
<dbReference type="HAMAP" id="MF_00672">
    <property type="entry name" value="UPF0761"/>
    <property type="match status" value="1"/>
</dbReference>
<dbReference type="InterPro" id="IPR023679">
    <property type="entry name" value="UPF0761_bac"/>
</dbReference>
<dbReference type="InterPro" id="IPR017039">
    <property type="entry name" value="Virul_fac_BrkB"/>
</dbReference>
<dbReference type="NCBIfam" id="TIGR00765">
    <property type="entry name" value="yihY_not_rbn"/>
    <property type="match status" value="1"/>
</dbReference>
<dbReference type="PANTHER" id="PTHR30213">
    <property type="entry name" value="INNER MEMBRANE PROTEIN YHJD"/>
    <property type="match status" value="1"/>
</dbReference>
<dbReference type="PANTHER" id="PTHR30213:SF0">
    <property type="entry name" value="UPF0761 MEMBRANE PROTEIN YIHY"/>
    <property type="match status" value="1"/>
</dbReference>
<dbReference type="Pfam" id="PF03631">
    <property type="entry name" value="Virul_fac_BrkB"/>
    <property type="match status" value="1"/>
</dbReference>